<feature type="chain" id="PRO_0000282423" description="Divergent protein kinase domain 1A">
    <location>
        <begin position="1"/>
        <end position="428"/>
    </location>
</feature>
<feature type="topological domain" description="Cytoplasmic" evidence="3">
    <location>
        <begin position="1"/>
        <end position="27"/>
    </location>
</feature>
<feature type="transmembrane region" description="Helical" evidence="3">
    <location>
        <begin position="28"/>
        <end position="48"/>
    </location>
</feature>
<feature type="topological domain" description="Lumenal" evidence="3">
    <location>
        <begin position="49"/>
        <end position="428"/>
    </location>
</feature>
<feature type="splice variant" id="VSP_024140" description="In isoform 2." evidence="4">
    <original>KAKLG</original>
    <variation>KDQHR</variation>
    <location>
        <begin position="158"/>
        <end position="162"/>
    </location>
</feature>
<feature type="splice variant" id="VSP_024141" description="In isoform 2." evidence="4">
    <location>
        <begin position="163"/>
        <end position="428"/>
    </location>
</feature>
<dbReference type="EMBL" id="AC093577">
    <property type="status" value="NOT_ANNOTATED_CDS"/>
    <property type="molecule type" value="Genomic_DNA"/>
</dbReference>
<dbReference type="EMBL" id="AL162740">
    <property type="status" value="NOT_ANNOTATED_CDS"/>
    <property type="molecule type" value="Genomic_DNA"/>
</dbReference>
<dbReference type="EMBL" id="BC070342">
    <property type="protein sequence ID" value="AAH70342.1"/>
    <property type="molecule type" value="mRNA"/>
</dbReference>
<dbReference type="CCDS" id="CCDS44173.1">
    <molecule id="Q5T7M9-1"/>
</dbReference>
<dbReference type="CCDS" id="CCDS72825.1">
    <molecule id="Q5T7M9-2"/>
</dbReference>
<dbReference type="RefSeq" id="NP_001006606.2">
    <molecule id="Q5T7M9-1"/>
    <property type="nucleotide sequence ID" value="NM_001006605.5"/>
</dbReference>
<dbReference type="RefSeq" id="NP_001239202.1">
    <molecule id="Q5T7M9-2"/>
    <property type="nucleotide sequence ID" value="NM_001252273.2"/>
</dbReference>
<dbReference type="BioGRID" id="132793">
    <property type="interactions" value="92"/>
</dbReference>
<dbReference type="FunCoup" id="Q5T7M9">
    <property type="interactions" value="683"/>
</dbReference>
<dbReference type="IntAct" id="Q5T7M9">
    <property type="interactions" value="86"/>
</dbReference>
<dbReference type="MINT" id="Q5T7M9"/>
<dbReference type="STRING" id="9606.ENSP00000359333"/>
<dbReference type="GlyGen" id="Q5T7M9">
    <property type="glycosylation" value="2 sites, 1 O-linked glycan (2 sites)"/>
</dbReference>
<dbReference type="iPTMnet" id="Q5T7M9"/>
<dbReference type="PhosphoSitePlus" id="Q5T7M9"/>
<dbReference type="SwissPalm" id="Q5T7M9"/>
<dbReference type="BioMuta" id="FAM69A"/>
<dbReference type="DMDM" id="74745404"/>
<dbReference type="jPOST" id="Q5T7M9"/>
<dbReference type="MassIVE" id="Q5T7M9"/>
<dbReference type="PaxDb" id="9606-ENSP00000359333"/>
<dbReference type="PeptideAtlas" id="Q5T7M9"/>
<dbReference type="ProteomicsDB" id="64665">
    <molecule id="Q5T7M9-1"/>
</dbReference>
<dbReference type="ProteomicsDB" id="64666">
    <molecule id="Q5T7M9-2"/>
</dbReference>
<dbReference type="Pumba" id="Q5T7M9"/>
<dbReference type="Antibodypedia" id="2517">
    <property type="antibodies" value="43 antibodies from 10 providers"/>
</dbReference>
<dbReference type="DNASU" id="388650"/>
<dbReference type="Ensembl" id="ENST00000370310.5">
    <molecule id="Q5T7M9-1"/>
    <property type="protein sequence ID" value="ENSP00000359333.4"/>
    <property type="gene ID" value="ENSG00000154511.12"/>
</dbReference>
<dbReference type="Ensembl" id="ENST00000615519.4">
    <molecule id="Q5T7M9-2"/>
    <property type="protein sequence ID" value="ENSP00000483279.1"/>
    <property type="gene ID" value="ENSG00000154511.12"/>
</dbReference>
<dbReference type="GeneID" id="388650"/>
<dbReference type="KEGG" id="hsa:388650"/>
<dbReference type="MANE-Select" id="ENST00000370310.5">
    <property type="protein sequence ID" value="ENSP00000359333.4"/>
    <property type="RefSeq nucleotide sequence ID" value="NM_001006605.5"/>
    <property type="RefSeq protein sequence ID" value="NP_001006606.2"/>
</dbReference>
<dbReference type="UCSC" id="uc001dpc.4">
    <molecule id="Q5T7M9-1"/>
    <property type="organism name" value="human"/>
</dbReference>
<dbReference type="AGR" id="HGNC:32213"/>
<dbReference type="CTD" id="388650"/>
<dbReference type="DisGeNET" id="388650"/>
<dbReference type="GeneCards" id="DIPK1A"/>
<dbReference type="HGNC" id="HGNC:32213">
    <property type="gene designation" value="DIPK1A"/>
</dbReference>
<dbReference type="HPA" id="ENSG00000154511">
    <property type="expression patterns" value="Low tissue specificity"/>
</dbReference>
<dbReference type="MalaCards" id="DIPK1A"/>
<dbReference type="MIM" id="614542">
    <property type="type" value="gene"/>
</dbReference>
<dbReference type="neXtProt" id="NX_Q5T7M9"/>
<dbReference type="OpenTargets" id="ENSG00000154511"/>
<dbReference type="PharmGKB" id="PA142671883"/>
<dbReference type="VEuPathDB" id="HostDB:ENSG00000154511"/>
<dbReference type="eggNOG" id="ENOG502QU5P">
    <property type="taxonomic scope" value="Eukaryota"/>
</dbReference>
<dbReference type="GeneTree" id="ENSGT00390000006452"/>
<dbReference type="HOGENOM" id="CLU_1634828_0_0_1"/>
<dbReference type="InParanoid" id="Q5T7M9"/>
<dbReference type="OMA" id="YMRIKYL"/>
<dbReference type="OrthoDB" id="8860232at2759"/>
<dbReference type="PAN-GO" id="Q5T7M9">
    <property type="GO annotations" value="0 GO annotations based on evolutionary models"/>
</dbReference>
<dbReference type="PhylomeDB" id="Q5T7M9"/>
<dbReference type="TreeFam" id="TF313319"/>
<dbReference type="PathwayCommons" id="Q5T7M9"/>
<dbReference type="SignaLink" id="Q5T7M9"/>
<dbReference type="BioGRID-ORCS" id="388650">
    <property type="hits" value="40 hits in 1156 CRISPR screens"/>
</dbReference>
<dbReference type="ChiTaRS" id="FAM69A">
    <property type="organism name" value="human"/>
</dbReference>
<dbReference type="GenomeRNAi" id="388650"/>
<dbReference type="Pharos" id="Q5T7M9">
    <property type="development level" value="Tdark"/>
</dbReference>
<dbReference type="PRO" id="PR:Q5T7M9"/>
<dbReference type="Proteomes" id="UP000005640">
    <property type="component" value="Chromosome 1"/>
</dbReference>
<dbReference type="RNAct" id="Q5T7M9">
    <property type="molecule type" value="protein"/>
</dbReference>
<dbReference type="Bgee" id="ENSG00000154511">
    <property type="expression patterns" value="Expressed in endothelial cell and 188 other cell types or tissues"/>
</dbReference>
<dbReference type="ExpressionAtlas" id="Q5T7M9">
    <property type="expression patterns" value="baseline and differential"/>
</dbReference>
<dbReference type="GO" id="GO:0005789">
    <property type="term" value="C:endoplasmic reticulum membrane"/>
    <property type="evidence" value="ECO:0007669"/>
    <property type="project" value="UniProtKB-SubCell"/>
</dbReference>
<dbReference type="InterPro" id="IPR022049">
    <property type="entry name" value="FAM69_kinase_dom"/>
</dbReference>
<dbReference type="InterPro" id="IPR029244">
    <property type="entry name" value="FAM69_N"/>
</dbReference>
<dbReference type="PANTHER" id="PTHR21093:SF4">
    <property type="entry name" value="DIVERGENT PROTEIN KINASE DOMAIN 1A"/>
    <property type="match status" value="1"/>
</dbReference>
<dbReference type="PANTHER" id="PTHR21093">
    <property type="entry name" value="DIVERGENT PROTEIN KINASE DOMAIN 1C-RELATED"/>
    <property type="match status" value="1"/>
</dbReference>
<dbReference type="Pfam" id="PF12260">
    <property type="entry name" value="PIP49_C"/>
    <property type="match status" value="1"/>
</dbReference>
<dbReference type="Pfam" id="PF14875">
    <property type="entry name" value="PIP49_N"/>
    <property type="match status" value="1"/>
</dbReference>
<dbReference type="SMART" id="SM01299">
    <property type="entry name" value="PIP49_N"/>
    <property type="match status" value="1"/>
</dbReference>
<reference key="1">
    <citation type="journal article" date="2006" name="Nature">
        <title>The DNA sequence and biological annotation of human chromosome 1.</title>
        <authorList>
            <person name="Gregory S.G."/>
            <person name="Barlow K.F."/>
            <person name="McLay K.E."/>
            <person name="Kaul R."/>
            <person name="Swarbreck D."/>
            <person name="Dunham A."/>
            <person name="Scott C.E."/>
            <person name="Howe K.L."/>
            <person name="Woodfine K."/>
            <person name="Spencer C.C.A."/>
            <person name="Jones M.C."/>
            <person name="Gillson C."/>
            <person name="Searle S."/>
            <person name="Zhou Y."/>
            <person name="Kokocinski F."/>
            <person name="McDonald L."/>
            <person name="Evans R."/>
            <person name="Phillips K."/>
            <person name="Atkinson A."/>
            <person name="Cooper R."/>
            <person name="Jones C."/>
            <person name="Hall R.E."/>
            <person name="Andrews T.D."/>
            <person name="Lloyd C."/>
            <person name="Ainscough R."/>
            <person name="Almeida J.P."/>
            <person name="Ambrose K.D."/>
            <person name="Anderson F."/>
            <person name="Andrew R.W."/>
            <person name="Ashwell R.I.S."/>
            <person name="Aubin K."/>
            <person name="Babbage A.K."/>
            <person name="Bagguley C.L."/>
            <person name="Bailey J."/>
            <person name="Beasley H."/>
            <person name="Bethel G."/>
            <person name="Bird C.P."/>
            <person name="Bray-Allen S."/>
            <person name="Brown J.Y."/>
            <person name="Brown A.J."/>
            <person name="Buckley D."/>
            <person name="Burton J."/>
            <person name="Bye J."/>
            <person name="Carder C."/>
            <person name="Chapman J.C."/>
            <person name="Clark S.Y."/>
            <person name="Clarke G."/>
            <person name="Clee C."/>
            <person name="Cobley V."/>
            <person name="Collier R.E."/>
            <person name="Corby N."/>
            <person name="Coville G.J."/>
            <person name="Davies J."/>
            <person name="Deadman R."/>
            <person name="Dunn M."/>
            <person name="Earthrowl M."/>
            <person name="Ellington A.G."/>
            <person name="Errington H."/>
            <person name="Frankish A."/>
            <person name="Frankland J."/>
            <person name="French L."/>
            <person name="Garner P."/>
            <person name="Garnett J."/>
            <person name="Gay L."/>
            <person name="Ghori M.R.J."/>
            <person name="Gibson R."/>
            <person name="Gilby L.M."/>
            <person name="Gillett W."/>
            <person name="Glithero R.J."/>
            <person name="Grafham D.V."/>
            <person name="Griffiths C."/>
            <person name="Griffiths-Jones S."/>
            <person name="Grocock R."/>
            <person name="Hammond S."/>
            <person name="Harrison E.S.I."/>
            <person name="Hart E."/>
            <person name="Haugen E."/>
            <person name="Heath P.D."/>
            <person name="Holmes S."/>
            <person name="Holt K."/>
            <person name="Howden P.J."/>
            <person name="Hunt A.R."/>
            <person name="Hunt S.E."/>
            <person name="Hunter G."/>
            <person name="Isherwood J."/>
            <person name="James R."/>
            <person name="Johnson C."/>
            <person name="Johnson D."/>
            <person name="Joy A."/>
            <person name="Kay M."/>
            <person name="Kershaw J.K."/>
            <person name="Kibukawa M."/>
            <person name="Kimberley A.M."/>
            <person name="King A."/>
            <person name="Knights A.J."/>
            <person name="Lad H."/>
            <person name="Laird G."/>
            <person name="Lawlor S."/>
            <person name="Leongamornlert D.A."/>
            <person name="Lloyd D.M."/>
            <person name="Loveland J."/>
            <person name="Lovell J."/>
            <person name="Lush M.J."/>
            <person name="Lyne R."/>
            <person name="Martin S."/>
            <person name="Mashreghi-Mohammadi M."/>
            <person name="Matthews L."/>
            <person name="Matthews N.S.W."/>
            <person name="McLaren S."/>
            <person name="Milne S."/>
            <person name="Mistry S."/>
            <person name="Moore M.J.F."/>
            <person name="Nickerson T."/>
            <person name="O'Dell C.N."/>
            <person name="Oliver K."/>
            <person name="Palmeiri A."/>
            <person name="Palmer S.A."/>
            <person name="Parker A."/>
            <person name="Patel D."/>
            <person name="Pearce A.V."/>
            <person name="Peck A.I."/>
            <person name="Pelan S."/>
            <person name="Phelps K."/>
            <person name="Phillimore B.J."/>
            <person name="Plumb R."/>
            <person name="Rajan J."/>
            <person name="Raymond C."/>
            <person name="Rouse G."/>
            <person name="Saenphimmachak C."/>
            <person name="Sehra H.K."/>
            <person name="Sheridan E."/>
            <person name="Shownkeen R."/>
            <person name="Sims S."/>
            <person name="Skuce C.D."/>
            <person name="Smith M."/>
            <person name="Steward C."/>
            <person name="Subramanian S."/>
            <person name="Sycamore N."/>
            <person name="Tracey A."/>
            <person name="Tromans A."/>
            <person name="Van Helmond Z."/>
            <person name="Wall M."/>
            <person name="Wallis J.M."/>
            <person name="White S."/>
            <person name="Whitehead S.L."/>
            <person name="Wilkinson J.E."/>
            <person name="Willey D.L."/>
            <person name="Williams H."/>
            <person name="Wilming L."/>
            <person name="Wray P.W."/>
            <person name="Wu Z."/>
            <person name="Coulson A."/>
            <person name="Vaudin M."/>
            <person name="Sulston J.E."/>
            <person name="Durbin R.M."/>
            <person name="Hubbard T."/>
            <person name="Wooster R."/>
            <person name="Dunham I."/>
            <person name="Carter N.P."/>
            <person name="McVean G."/>
            <person name="Ross M.T."/>
            <person name="Harrow J."/>
            <person name="Olson M.V."/>
            <person name="Beck S."/>
            <person name="Rogers J."/>
            <person name="Bentley D.R."/>
        </authorList>
    </citation>
    <scope>NUCLEOTIDE SEQUENCE [LARGE SCALE GENOMIC DNA]</scope>
</reference>
<reference key="2">
    <citation type="journal article" date="2004" name="Genome Res.">
        <title>The status, quality, and expansion of the NIH full-length cDNA project: the Mammalian Gene Collection (MGC).</title>
        <authorList>
            <consortium name="The MGC Project Team"/>
        </authorList>
    </citation>
    <scope>NUCLEOTIDE SEQUENCE [LARGE SCALE MRNA] (ISOFORM 2)</scope>
</reference>
<name>DIK1A_HUMAN</name>
<gene>
    <name evidence="6" type="primary">DIPK1A</name>
    <name type="synonym">FAM69A</name>
</gene>
<organism>
    <name type="scientific">Homo sapiens</name>
    <name type="common">Human</name>
    <dbReference type="NCBI Taxonomy" id="9606"/>
    <lineage>
        <taxon>Eukaryota</taxon>
        <taxon>Metazoa</taxon>
        <taxon>Chordata</taxon>
        <taxon>Craniata</taxon>
        <taxon>Vertebrata</taxon>
        <taxon>Euteleostomi</taxon>
        <taxon>Mammalia</taxon>
        <taxon>Eutheria</taxon>
        <taxon>Euarchontoglires</taxon>
        <taxon>Primates</taxon>
        <taxon>Haplorrhini</taxon>
        <taxon>Catarrhini</taxon>
        <taxon>Hominidae</taxon>
        <taxon>Homo</taxon>
    </lineage>
</organism>
<protein>
    <recommendedName>
        <fullName evidence="5">Divergent protein kinase domain 1A</fullName>
    </recommendedName>
    <alternativeName>
        <fullName>Protein FAM69A</fullName>
    </alternativeName>
</protein>
<proteinExistence type="evidence at protein level"/>
<sequence>MARSLCPGAWLRKPYYLQARFSYVRMKYLFFSWLVVFVGSWIIYVQYSTYTELCRGKDCKKIICDKYKTGVIDGPACNSLCVTETLYFGKCLSTKPNNQMYLGIWDNLPGVVKCQMEQALHLDFGTELEPRKEIVLFDKPTRGTTVQKFKEMVYSLFKAKLGDQGNLSELVNLILTVADGDKDGQVSLGEAKSAWALLQLNEFLLMVILQDKEHTPKLMGFCGDLYVMESVEYTSLYGISLPWVIELFIPSGFRRSMDQLFTPSWPRKAKIAIGLLEFVEDVFHGPYGNFLMCDTSAKNLGYNDKYDLKMVDMRKIVPETNLKELIKDRHCESDLDCVYGTDCRTSCDQSTMKCTSEVIQPNLAKACQLLKDYLLRGAPSEIREELEKQLYSCIALKVTANQMEMEHSLILNNLKTLLWKKISYTNDS</sequence>
<evidence type="ECO:0000250" key="1"/>
<evidence type="ECO:0000250" key="2">
    <source>
        <dbReference type="UniProtKB" id="Q9D6I7"/>
    </source>
</evidence>
<evidence type="ECO:0000255" key="3"/>
<evidence type="ECO:0000303" key="4">
    <source>
    </source>
</evidence>
<evidence type="ECO:0000305" key="5"/>
<evidence type="ECO:0000312" key="6">
    <source>
        <dbReference type="HGNC" id="HGNC:32213"/>
    </source>
</evidence>
<comment type="interaction">
    <interactant intactId="EBI-25960650">
        <id>Q5T7M9-2</id>
    </interactant>
    <interactant intactId="EBI-466029">
        <id>P42858</id>
        <label>HTT</label>
    </interactant>
    <organismsDiffer>false</organismsDiffer>
    <experiments>3</experiments>
</comment>
<comment type="subcellular location">
    <subcellularLocation>
        <location evidence="2">Endoplasmic reticulum membrane</location>
        <topology evidence="2">Single-pass type II membrane protein</topology>
    </subcellularLocation>
</comment>
<comment type="alternative products">
    <event type="alternative splicing"/>
    <isoform>
        <id>Q5T7M9-1</id>
        <name>1</name>
        <sequence type="displayed"/>
    </isoform>
    <isoform>
        <id>Q5T7M9-2</id>
        <name>2</name>
        <sequence type="described" ref="VSP_024140 VSP_024141"/>
    </isoform>
</comment>
<comment type="PTM">
    <text evidence="1">Among the many cysteines in the lumenal domain, most are probably involved in disulfide bonds.</text>
</comment>
<comment type="similarity">
    <text evidence="5">Belongs to the DIPK family.</text>
</comment>
<keyword id="KW-0025">Alternative splicing</keyword>
<keyword id="KW-1015">Disulfide bond</keyword>
<keyword id="KW-0256">Endoplasmic reticulum</keyword>
<keyword id="KW-0472">Membrane</keyword>
<keyword id="KW-1267">Proteomics identification</keyword>
<keyword id="KW-1185">Reference proteome</keyword>
<keyword id="KW-0735">Signal-anchor</keyword>
<keyword id="KW-0812">Transmembrane</keyword>
<keyword id="KW-1133">Transmembrane helix</keyword>
<accession>Q5T7M9</accession>
<accession>Q6IRV2</accession>